<feature type="chain" id="PRO_0000199301" description="Bifunctional protein FolD">
    <location>
        <begin position="1"/>
        <end position="285"/>
    </location>
</feature>
<feature type="binding site" evidence="1">
    <location>
        <begin position="166"/>
        <end position="168"/>
    </location>
    <ligand>
        <name>NADP(+)</name>
        <dbReference type="ChEBI" id="CHEBI:58349"/>
    </ligand>
</feature>
<feature type="binding site" evidence="1">
    <location>
        <position position="232"/>
    </location>
    <ligand>
        <name>NADP(+)</name>
        <dbReference type="ChEBI" id="CHEBI:58349"/>
    </ligand>
</feature>
<comment type="function">
    <text evidence="1">Catalyzes the oxidation of 5,10-methylenetetrahydrofolate to 5,10-methenyltetrahydrofolate and then the hydrolysis of 5,10-methenyltetrahydrofolate to 10-formyltetrahydrofolate.</text>
</comment>
<comment type="catalytic activity">
    <reaction evidence="1">
        <text>(6R)-5,10-methylene-5,6,7,8-tetrahydrofolate + NADP(+) = (6R)-5,10-methenyltetrahydrofolate + NADPH</text>
        <dbReference type="Rhea" id="RHEA:22812"/>
        <dbReference type="ChEBI" id="CHEBI:15636"/>
        <dbReference type="ChEBI" id="CHEBI:57455"/>
        <dbReference type="ChEBI" id="CHEBI:57783"/>
        <dbReference type="ChEBI" id="CHEBI:58349"/>
        <dbReference type="EC" id="1.5.1.5"/>
    </reaction>
</comment>
<comment type="catalytic activity">
    <reaction evidence="1">
        <text>(6R)-5,10-methenyltetrahydrofolate + H2O = (6R)-10-formyltetrahydrofolate + H(+)</text>
        <dbReference type="Rhea" id="RHEA:23700"/>
        <dbReference type="ChEBI" id="CHEBI:15377"/>
        <dbReference type="ChEBI" id="CHEBI:15378"/>
        <dbReference type="ChEBI" id="CHEBI:57455"/>
        <dbReference type="ChEBI" id="CHEBI:195366"/>
        <dbReference type="EC" id="3.5.4.9"/>
    </reaction>
</comment>
<comment type="pathway">
    <text evidence="1">One-carbon metabolism; tetrahydrofolate interconversion.</text>
</comment>
<comment type="subunit">
    <text evidence="1">Homodimer.</text>
</comment>
<comment type="similarity">
    <text evidence="1">Belongs to the tetrahydrofolate dehydrogenase/cyclohydrolase family.</text>
</comment>
<protein>
    <recommendedName>
        <fullName evidence="1">Bifunctional protein FolD</fullName>
    </recommendedName>
    <domain>
        <recommendedName>
            <fullName evidence="1">Methylenetetrahydrofolate dehydrogenase</fullName>
            <ecNumber evidence="1">1.5.1.5</ecNumber>
        </recommendedName>
    </domain>
    <domain>
        <recommendedName>
            <fullName evidence="1">Methenyltetrahydrofolate cyclohydrolase</fullName>
            <ecNumber evidence="1">3.5.4.9</ecNumber>
        </recommendedName>
    </domain>
</protein>
<sequence>MSAIIIDGIKIAKKIELNLLKKIEEREKNKKRIPGLAVILIGKNPASEIYVKRKISVCKKVGFISKYWSFPINVDEKDILNLIEKLNNNINIDGILVQLPIPKQINYYKIFSSIRPDKDVDGFHPYNTGSLCQRNPTLRACTPKGIITMLNYTKIKTHGLNAVMVGASNIVGRPMSMELLLAGCTTTVTHRFTKNLRHHIKNADLLVVAIGKPNFLHGDWIKEGAIVIDVGINKLKDGSIVGDVDFKSASLKAAYITPVPGGVGPITVITLLENTLEACEKYHEF</sequence>
<keyword id="KW-0028">Amino-acid biosynthesis</keyword>
<keyword id="KW-0368">Histidine biosynthesis</keyword>
<keyword id="KW-0378">Hydrolase</keyword>
<keyword id="KW-0486">Methionine biosynthesis</keyword>
<keyword id="KW-0511">Multifunctional enzyme</keyword>
<keyword id="KW-0521">NADP</keyword>
<keyword id="KW-0554">One-carbon metabolism</keyword>
<keyword id="KW-0560">Oxidoreductase</keyword>
<keyword id="KW-0658">Purine biosynthesis</keyword>
<evidence type="ECO:0000255" key="1">
    <source>
        <dbReference type="HAMAP-Rule" id="MF_01576"/>
    </source>
</evidence>
<proteinExistence type="inferred from homology"/>
<gene>
    <name evidence="1" type="primary">folD</name>
    <name type="ordered locus">BUsg_470</name>
</gene>
<reference key="1">
    <citation type="journal article" date="2002" name="Science">
        <title>50 million years of genomic stasis in endosymbiotic bacteria.</title>
        <authorList>
            <person name="Tamas I."/>
            <person name="Klasson L."/>
            <person name="Canbaeck B."/>
            <person name="Naeslund A.K."/>
            <person name="Eriksson A.-S."/>
            <person name="Wernegreen J.J."/>
            <person name="Sandstroem J.P."/>
            <person name="Moran N.A."/>
            <person name="Andersson S.G.E."/>
        </authorList>
    </citation>
    <scope>NUCLEOTIDE SEQUENCE [LARGE SCALE GENOMIC DNA]</scope>
    <source>
        <strain>Sg</strain>
    </source>
</reference>
<dbReference type="EC" id="1.5.1.5" evidence="1"/>
<dbReference type="EC" id="3.5.4.9" evidence="1"/>
<dbReference type="EMBL" id="AE013218">
    <property type="protein sequence ID" value="AAM68013.1"/>
    <property type="molecule type" value="Genomic_DNA"/>
</dbReference>
<dbReference type="RefSeq" id="WP_011053980.1">
    <property type="nucleotide sequence ID" value="NC_004061.1"/>
</dbReference>
<dbReference type="SMR" id="Q8K979"/>
<dbReference type="STRING" id="198804.BUsg_470"/>
<dbReference type="GeneID" id="93003942"/>
<dbReference type="KEGG" id="bas:BUsg_470"/>
<dbReference type="eggNOG" id="COG0190">
    <property type="taxonomic scope" value="Bacteria"/>
</dbReference>
<dbReference type="HOGENOM" id="CLU_034045_2_1_6"/>
<dbReference type="UniPathway" id="UPA00193"/>
<dbReference type="Proteomes" id="UP000000416">
    <property type="component" value="Chromosome"/>
</dbReference>
<dbReference type="GO" id="GO:0005829">
    <property type="term" value="C:cytosol"/>
    <property type="evidence" value="ECO:0007669"/>
    <property type="project" value="TreeGrafter"/>
</dbReference>
<dbReference type="GO" id="GO:0004477">
    <property type="term" value="F:methenyltetrahydrofolate cyclohydrolase activity"/>
    <property type="evidence" value="ECO:0007669"/>
    <property type="project" value="UniProtKB-UniRule"/>
</dbReference>
<dbReference type="GO" id="GO:0004488">
    <property type="term" value="F:methylenetetrahydrofolate dehydrogenase (NADP+) activity"/>
    <property type="evidence" value="ECO:0007669"/>
    <property type="project" value="UniProtKB-UniRule"/>
</dbReference>
<dbReference type="GO" id="GO:0000105">
    <property type="term" value="P:L-histidine biosynthetic process"/>
    <property type="evidence" value="ECO:0007669"/>
    <property type="project" value="UniProtKB-KW"/>
</dbReference>
<dbReference type="GO" id="GO:0009086">
    <property type="term" value="P:methionine biosynthetic process"/>
    <property type="evidence" value="ECO:0007669"/>
    <property type="project" value="UniProtKB-KW"/>
</dbReference>
<dbReference type="GO" id="GO:0006164">
    <property type="term" value="P:purine nucleotide biosynthetic process"/>
    <property type="evidence" value="ECO:0007669"/>
    <property type="project" value="UniProtKB-KW"/>
</dbReference>
<dbReference type="GO" id="GO:0035999">
    <property type="term" value="P:tetrahydrofolate interconversion"/>
    <property type="evidence" value="ECO:0007669"/>
    <property type="project" value="UniProtKB-UniRule"/>
</dbReference>
<dbReference type="CDD" id="cd01080">
    <property type="entry name" value="NAD_bind_m-THF_DH_Cyclohyd"/>
    <property type="match status" value="1"/>
</dbReference>
<dbReference type="FunFam" id="3.40.50.720:FF:000006">
    <property type="entry name" value="Bifunctional protein FolD"/>
    <property type="match status" value="1"/>
</dbReference>
<dbReference type="FunFam" id="3.40.50.10860:FF:000005">
    <property type="entry name" value="C-1-tetrahydrofolate synthase, cytoplasmic, putative"/>
    <property type="match status" value="1"/>
</dbReference>
<dbReference type="Gene3D" id="3.40.50.10860">
    <property type="entry name" value="Leucine Dehydrogenase, chain A, domain 1"/>
    <property type="match status" value="1"/>
</dbReference>
<dbReference type="Gene3D" id="3.40.50.720">
    <property type="entry name" value="NAD(P)-binding Rossmann-like Domain"/>
    <property type="match status" value="1"/>
</dbReference>
<dbReference type="HAMAP" id="MF_01576">
    <property type="entry name" value="THF_DHG_CYH"/>
    <property type="match status" value="1"/>
</dbReference>
<dbReference type="InterPro" id="IPR046346">
    <property type="entry name" value="Aminoacid_DH-like_N_sf"/>
</dbReference>
<dbReference type="InterPro" id="IPR036291">
    <property type="entry name" value="NAD(P)-bd_dom_sf"/>
</dbReference>
<dbReference type="InterPro" id="IPR000672">
    <property type="entry name" value="THF_DH/CycHdrlase"/>
</dbReference>
<dbReference type="InterPro" id="IPR020630">
    <property type="entry name" value="THF_DH/CycHdrlase_cat_dom"/>
</dbReference>
<dbReference type="InterPro" id="IPR020867">
    <property type="entry name" value="THF_DH/CycHdrlase_CS"/>
</dbReference>
<dbReference type="InterPro" id="IPR020631">
    <property type="entry name" value="THF_DH/CycHdrlase_NAD-bd_dom"/>
</dbReference>
<dbReference type="NCBIfam" id="NF008058">
    <property type="entry name" value="PRK10792.1"/>
    <property type="match status" value="1"/>
</dbReference>
<dbReference type="PANTHER" id="PTHR48099:SF5">
    <property type="entry name" value="C-1-TETRAHYDROFOLATE SYNTHASE, CYTOPLASMIC"/>
    <property type="match status" value="1"/>
</dbReference>
<dbReference type="PANTHER" id="PTHR48099">
    <property type="entry name" value="C-1-TETRAHYDROFOLATE SYNTHASE, CYTOPLASMIC-RELATED"/>
    <property type="match status" value="1"/>
</dbReference>
<dbReference type="Pfam" id="PF00763">
    <property type="entry name" value="THF_DHG_CYH"/>
    <property type="match status" value="1"/>
</dbReference>
<dbReference type="Pfam" id="PF02882">
    <property type="entry name" value="THF_DHG_CYH_C"/>
    <property type="match status" value="1"/>
</dbReference>
<dbReference type="PRINTS" id="PR00085">
    <property type="entry name" value="THFDHDRGNASE"/>
</dbReference>
<dbReference type="SUPFAM" id="SSF53223">
    <property type="entry name" value="Aminoacid dehydrogenase-like, N-terminal domain"/>
    <property type="match status" value="1"/>
</dbReference>
<dbReference type="SUPFAM" id="SSF51735">
    <property type="entry name" value="NAD(P)-binding Rossmann-fold domains"/>
    <property type="match status" value="1"/>
</dbReference>
<dbReference type="PROSITE" id="PS00766">
    <property type="entry name" value="THF_DHG_CYH_1"/>
    <property type="match status" value="1"/>
</dbReference>
<dbReference type="PROSITE" id="PS00767">
    <property type="entry name" value="THF_DHG_CYH_2"/>
    <property type="match status" value="1"/>
</dbReference>
<organism>
    <name type="scientific">Buchnera aphidicola subsp. Schizaphis graminum (strain Sg)</name>
    <dbReference type="NCBI Taxonomy" id="198804"/>
    <lineage>
        <taxon>Bacteria</taxon>
        <taxon>Pseudomonadati</taxon>
        <taxon>Pseudomonadota</taxon>
        <taxon>Gammaproteobacteria</taxon>
        <taxon>Enterobacterales</taxon>
        <taxon>Erwiniaceae</taxon>
        <taxon>Buchnera</taxon>
    </lineage>
</organism>
<name>FOLD_BUCAP</name>
<accession>Q8K979</accession>